<dbReference type="EMBL" id="AE009441">
    <property type="protein sequence ID" value="AAL63725.1"/>
    <property type="status" value="ALT_INIT"/>
    <property type="molecule type" value="Genomic_DNA"/>
</dbReference>
<dbReference type="RefSeq" id="WP_128621474.1">
    <property type="nucleotide sequence ID" value="NC_003364.1"/>
</dbReference>
<dbReference type="SMR" id="Q8ZWH7"/>
<dbReference type="FunCoup" id="Q8ZWH7">
    <property type="interactions" value="180"/>
</dbReference>
<dbReference type="STRING" id="178306.PAE1782"/>
<dbReference type="EnsemblBacteria" id="AAL63725">
    <property type="protein sequence ID" value="AAL63725"/>
    <property type="gene ID" value="PAE1782"/>
</dbReference>
<dbReference type="GeneID" id="1465976"/>
<dbReference type="KEGG" id="pai:PAE1782"/>
<dbReference type="PATRIC" id="fig|178306.9.peg.1316"/>
<dbReference type="eggNOG" id="arCOG04098">
    <property type="taxonomic scope" value="Archaea"/>
</dbReference>
<dbReference type="HOGENOM" id="CLU_083987_0_2_2"/>
<dbReference type="InParanoid" id="Q8ZWH7"/>
<dbReference type="Proteomes" id="UP000002439">
    <property type="component" value="Chromosome"/>
</dbReference>
<dbReference type="GO" id="GO:0022625">
    <property type="term" value="C:cytosolic large ribosomal subunit"/>
    <property type="evidence" value="ECO:0000318"/>
    <property type="project" value="GO_Central"/>
</dbReference>
<dbReference type="GO" id="GO:0019843">
    <property type="term" value="F:rRNA binding"/>
    <property type="evidence" value="ECO:0007669"/>
    <property type="project" value="UniProtKB-UniRule"/>
</dbReference>
<dbReference type="GO" id="GO:0003735">
    <property type="term" value="F:structural constituent of ribosome"/>
    <property type="evidence" value="ECO:0000318"/>
    <property type="project" value="GO_Central"/>
</dbReference>
<dbReference type="GO" id="GO:0002181">
    <property type="term" value="P:cytoplasmic translation"/>
    <property type="evidence" value="ECO:0000318"/>
    <property type="project" value="GO_Central"/>
</dbReference>
<dbReference type="CDD" id="cd00336">
    <property type="entry name" value="Ribosomal_L22"/>
    <property type="match status" value="1"/>
</dbReference>
<dbReference type="Gene3D" id="3.90.470.10">
    <property type="entry name" value="Ribosomal protein L22/L17"/>
    <property type="match status" value="1"/>
</dbReference>
<dbReference type="HAMAP" id="MF_01331_A">
    <property type="entry name" value="Ribosomal_uL22_A"/>
    <property type="match status" value="1"/>
</dbReference>
<dbReference type="InterPro" id="IPR001063">
    <property type="entry name" value="Ribosomal_uL22"/>
</dbReference>
<dbReference type="InterPro" id="IPR005721">
    <property type="entry name" value="Ribosomal_uL22_euk/arc"/>
</dbReference>
<dbReference type="InterPro" id="IPR036394">
    <property type="entry name" value="Ribosomal_uL22_sf"/>
</dbReference>
<dbReference type="NCBIfam" id="NF003260">
    <property type="entry name" value="PRK04223.1"/>
    <property type="match status" value="1"/>
</dbReference>
<dbReference type="NCBIfam" id="TIGR01038">
    <property type="entry name" value="uL22_arch_euk"/>
    <property type="match status" value="1"/>
</dbReference>
<dbReference type="PANTHER" id="PTHR11593">
    <property type="entry name" value="60S RIBOSOMAL PROTEIN L17"/>
    <property type="match status" value="1"/>
</dbReference>
<dbReference type="PANTHER" id="PTHR11593:SF10">
    <property type="entry name" value="60S RIBOSOMAL PROTEIN L17"/>
    <property type="match status" value="1"/>
</dbReference>
<dbReference type="Pfam" id="PF00237">
    <property type="entry name" value="Ribosomal_L22"/>
    <property type="match status" value="1"/>
</dbReference>
<dbReference type="SUPFAM" id="SSF54843">
    <property type="entry name" value="Ribosomal protein L22"/>
    <property type="match status" value="1"/>
</dbReference>
<protein>
    <recommendedName>
        <fullName evidence="1">Large ribosomal subunit protein uL22</fullName>
    </recommendedName>
    <alternativeName>
        <fullName evidence="2">50S ribosomal protein L22</fullName>
    </alternativeName>
</protein>
<gene>
    <name evidence="1" type="primary">rpl22</name>
    <name type="ordered locus">PAE1782</name>
</gene>
<proteinExistence type="inferred from homology"/>
<keyword id="KW-1185">Reference proteome</keyword>
<keyword id="KW-0687">Ribonucleoprotein</keyword>
<keyword id="KW-0689">Ribosomal protein</keyword>
<keyword id="KW-0694">RNA-binding</keyword>
<keyword id="KW-0699">rRNA-binding</keyword>
<reference key="1">
    <citation type="journal article" date="2002" name="Proc. Natl. Acad. Sci. U.S.A.">
        <title>Genome sequence of the hyperthermophilic crenarchaeon Pyrobaculum aerophilum.</title>
        <authorList>
            <person name="Fitz-Gibbon S.T."/>
            <person name="Ladner H."/>
            <person name="Kim U.-J."/>
            <person name="Stetter K.O."/>
            <person name="Simon M.I."/>
            <person name="Miller J.H."/>
        </authorList>
    </citation>
    <scope>NUCLEOTIDE SEQUENCE [LARGE SCALE GENOMIC DNA]</scope>
    <source>
        <strain>ATCC 51768 / DSM 7523 / JCM 9630 / CIP 104966 / NBRC 100827 / IM2</strain>
    </source>
</reference>
<accession>Q8ZWH7</accession>
<sequence>MPRHQSYSLSDEDIIELVFRNYGVKITPEQIARAYAPEQRMSWKKSVEVARFIKGMTLKQAKTWLEDVVKLKRPVPIKTFKKKQAHHATPWEGWPVAKWPVKVARRFLQVLENLENNARFRGLDVDRVVIVHAAAHKGFKIPNIMPRAFGRATRFDEQTVNVELVAVELPKEVLPKRYKLNLVKR</sequence>
<comment type="function">
    <text evidence="1">This protein binds specifically to 23S rRNA. It makes multiple contacts with different domains of the 23S rRNA in the assembled 50S subunit and ribosome.</text>
</comment>
<comment type="function">
    <text evidence="1">The globular domain of the protein is located near the polypeptide exit tunnel on the outside of the subunit, while an extended beta-hairpin is found that lines the wall of the exit tunnel in the center of the 70S ribosome.</text>
</comment>
<comment type="subunit">
    <text evidence="1">Part of the 50S ribosomal subunit.</text>
</comment>
<comment type="similarity">
    <text evidence="1">Belongs to the universal ribosomal protein uL22 family.</text>
</comment>
<comment type="sequence caution" evidence="2">
    <conflict type="erroneous initiation">
        <sequence resource="EMBL-CDS" id="AAL63725"/>
    </conflict>
    <text>Truncated N-terminus.</text>
</comment>
<name>RL22_PYRAE</name>
<feature type="chain" id="PRO_0000125283" description="Large ribosomal subunit protein uL22">
    <location>
        <begin position="1"/>
        <end position="185"/>
    </location>
</feature>
<evidence type="ECO:0000255" key="1">
    <source>
        <dbReference type="HAMAP-Rule" id="MF_01331"/>
    </source>
</evidence>
<evidence type="ECO:0000305" key="2"/>
<organism>
    <name type="scientific">Pyrobaculum aerophilum (strain ATCC 51768 / DSM 7523 / JCM 9630 / CIP 104966 / NBRC 100827 / IM2)</name>
    <dbReference type="NCBI Taxonomy" id="178306"/>
    <lineage>
        <taxon>Archaea</taxon>
        <taxon>Thermoproteota</taxon>
        <taxon>Thermoprotei</taxon>
        <taxon>Thermoproteales</taxon>
        <taxon>Thermoproteaceae</taxon>
        <taxon>Pyrobaculum</taxon>
    </lineage>
</organism>